<reference key="1">
    <citation type="submission" date="2008-01" db="EMBL/GenBank/DDBJ databases">
        <title>Complete sequence of Shewanella halifaxensis HAW-EB4.</title>
        <authorList>
            <consortium name="US DOE Joint Genome Institute"/>
            <person name="Copeland A."/>
            <person name="Lucas S."/>
            <person name="Lapidus A."/>
            <person name="Glavina del Rio T."/>
            <person name="Dalin E."/>
            <person name="Tice H."/>
            <person name="Bruce D."/>
            <person name="Goodwin L."/>
            <person name="Pitluck S."/>
            <person name="Sims D."/>
            <person name="Brettin T."/>
            <person name="Detter J.C."/>
            <person name="Han C."/>
            <person name="Kuske C.R."/>
            <person name="Schmutz J."/>
            <person name="Larimer F."/>
            <person name="Land M."/>
            <person name="Hauser L."/>
            <person name="Kyrpides N."/>
            <person name="Kim E."/>
            <person name="Zhao J.-S."/>
            <person name="Richardson P."/>
        </authorList>
    </citation>
    <scope>NUCLEOTIDE SEQUENCE [LARGE SCALE GENOMIC DNA]</scope>
    <source>
        <strain>HAW-EB4</strain>
    </source>
</reference>
<gene>
    <name evidence="1" type="primary">rlmE</name>
    <name evidence="1" type="synonym">ftsJ</name>
    <name evidence="1" type="synonym">rrmJ</name>
    <name type="ordered locus">Shal_3155</name>
</gene>
<keyword id="KW-0963">Cytoplasm</keyword>
<keyword id="KW-0489">Methyltransferase</keyword>
<keyword id="KW-0698">rRNA processing</keyword>
<keyword id="KW-0949">S-adenosyl-L-methionine</keyword>
<keyword id="KW-0808">Transferase</keyword>
<evidence type="ECO:0000255" key="1">
    <source>
        <dbReference type="HAMAP-Rule" id="MF_01547"/>
    </source>
</evidence>
<accession>B0TQB0</accession>
<proteinExistence type="inferred from homology"/>
<dbReference type="EC" id="2.1.1.166" evidence="1"/>
<dbReference type="EMBL" id="CP000931">
    <property type="protein sequence ID" value="ABZ77702.1"/>
    <property type="molecule type" value="Genomic_DNA"/>
</dbReference>
<dbReference type="RefSeq" id="WP_012278226.1">
    <property type="nucleotide sequence ID" value="NC_010334.1"/>
</dbReference>
<dbReference type="SMR" id="B0TQB0"/>
<dbReference type="STRING" id="458817.Shal_3155"/>
<dbReference type="KEGG" id="shl:Shal_3155"/>
<dbReference type="eggNOG" id="COG0293">
    <property type="taxonomic scope" value="Bacteria"/>
</dbReference>
<dbReference type="HOGENOM" id="CLU_009422_4_0_6"/>
<dbReference type="OrthoDB" id="9790080at2"/>
<dbReference type="Proteomes" id="UP000001317">
    <property type="component" value="Chromosome"/>
</dbReference>
<dbReference type="GO" id="GO:0005737">
    <property type="term" value="C:cytoplasm"/>
    <property type="evidence" value="ECO:0007669"/>
    <property type="project" value="UniProtKB-SubCell"/>
</dbReference>
<dbReference type="GO" id="GO:0008650">
    <property type="term" value="F:rRNA (uridine-2'-O-)-methyltransferase activity"/>
    <property type="evidence" value="ECO:0007669"/>
    <property type="project" value="UniProtKB-UniRule"/>
</dbReference>
<dbReference type="CDD" id="cd02440">
    <property type="entry name" value="AdoMet_MTases"/>
    <property type="match status" value="1"/>
</dbReference>
<dbReference type="FunFam" id="3.40.50.150:FF:000005">
    <property type="entry name" value="Ribosomal RNA large subunit methyltransferase E"/>
    <property type="match status" value="1"/>
</dbReference>
<dbReference type="Gene3D" id="3.40.50.150">
    <property type="entry name" value="Vaccinia Virus protein VP39"/>
    <property type="match status" value="1"/>
</dbReference>
<dbReference type="HAMAP" id="MF_01547">
    <property type="entry name" value="RNA_methyltr_E"/>
    <property type="match status" value="1"/>
</dbReference>
<dbReference type="InterPro" id="IPR050082">
    <property type="entry name" value="RNA_methyltr_RlmE"/>
</dbReference>
<dbReference type="InterPro" id="IPR002877">
    <property type="entry name" value="RNA_MeTrfase_FtsJ_dom"/>
</dbReference>
<dbReference type="InterPro" id="IPR015507">
    <property type="entry name" value="rRNA-MeTfrase_E"/>
</dbReference>
<dbReference type="InterPro" id="IPR029063">
    <property type="entry name" value="SAM-dependent_MTases_sf"/>
</dbReference>
<dbReference type="NCBIfam" id="NF008390">
    <property type="entry name" value="PRK11188.1"/>
    <property type="match status" value="1"/>
</dbReference>
<dbReference type="PANTHER" id="PTHR10920">
    <property type="entry name" value="RIBOSOMAL RNA METHYLTRANSFERASE"/>
    <property type="match status" value="1"/>
</dbReference>
<dbReference type="PANTHER" id="PTHR10920:SF18">
    <property type="entry name" value="RRNA METHYLTRANSFERASE 2, MITOCHONDRIAL"/>
    <property type="match status" value="1"/>
</dbReference>
<dbReference type="Pfam" id="PF01728">
    <property type="entry name" value="FtsJ"/>
    <property type="match status" value="1"/>
</dbReference>
<dbReference type="PIRSF" id="PIRSF005461">
    <property type="entry name" value="23S_rRNA_mtase"/>
    <property type="match status" value="1"/>
</dbReference>
<dbReference type="SUPFAM" id="SSF53335">
    <property type="entry name" value="S-adenosyl-L-methionine-dependent methyltransferases"/>
    <property type="match status" value="1"/>
</dbReference>
<protein>
    <recommendedName>
        <fullName evidence="1">Ribosomal RNA large subunit methyltransferase E</fullName>
        <ecNumber evidence="1">2.1.1.166</ecNumber>
    </recommendedName>
    <alternativeName>
        <fullName evidence="1">23S rRNA Um2552 methyltransferase</fullName>
    </alternativeName>
    <alternativeName>
        <fullName evidence="1">rRNA (uridine-2'-O-)-methyltransferase</fullName>
    </alternativeName>
</protein>
<name>RLME_SHEHH</name>
<comment type="function">
    <text evidence="1">Specifically methylates the uridine in position 2552 of 23S rRNA at the 2'-O position of the ribose in the fully assembled 50S ribosomal subunit.</text>
</comment>
<comment type="catalytic activity">
    <reaction evidence="1">
        <text>uridine(2552) in 23S rRNA + S-adenosyl-L-methionine = 2'-O-methyluridine(2552) in 23S rRNA + S-adenosyl-L-homocysteine + H(+)</text>
        <dbReference type="Rhea" id="RHEA:42720"/>
        <dbReference type="Rhea" id="RHEA-COMP:10202"/>
        <dbReference type="Rhea" id="RHEA-COMP:10203"/>
        <dbReference type="ChEBI" id="CHEBI:15378"/>
        <dbReference type="ChEBI" id="CHEBI:57856"/>
        <dbReference type="ChEBI" id="CHEBI:59789"/>
        <dbReference type="ChEBI" id="CHEBI:65315"/>
        <dbReference type="ChEBI" id="CHEBI:74478"/>
        <dbReference type="EC" id="2.1.1.166"/>
    </reaction>
</comment>
<comment type="subcellular location">
    <subcellularLocation>
        <location evidence="1">Cytoplasm</location>
    </subcellularLocation>
</comment>
<comment type="similarity">
    <text evidence="1">Belongs to the class I-like SAM-binding methyltransferase superfamily. RNA methyltransferase RlmE family.</text>
</comment>
<feature type="chain" id="PRO_1000087715" description="Ribosomal RNA large subunit methyltransferase E">
    <location>
        <begin position="1"/>
        <end position="209"/>
    </location>
</feature>
<feature type="active site" description="Proton acceptor" evidence="1">
    <location>
        <position position="164"/>
    </location>
</feature>
<feature type="binding site" evidence="1">
    <location>
        <position position="63"/>
    </location>
    <ligand>
        <name>S-adenosyl-L-methionine</name>
        <dbReference type="ChEBI" id="CHEBI:59789"/>
    </ligand>
</feature>
<feature type="binding site" evidence="1">
    <location>
        <position position="65"/>
    </location>
    <ligand>
        <name>S-adenosyl-L-methionine</name>
        <dbReference type="ChEBI" id="CHEBI:59789"/>
    </ligand>
</feature>
<feature type="binding site" evidence="1">
    <location>
        <position position="83"/>
    </location>
    <ligand>
        <name>S-adenosyl-L-methionine</name>
        <dbReference type="ChEBI" id="CHEBI:59789"/>
    </ligand>
</feature>
<feature type="binding site" evidence="1">
    <location>
        <position position="99"/>
    </location>
    <ligand>
        <name>S-adenosyl-L-methionine</name>
        <dbReference type="ChEBI" id="CHEBI:59789"/>
    </ligand>
</feature>
<feature type="binding site" evidence="1">
    <location>
        <position position="124"/>
    </location>
    <ligand>
        <name>S-adenosyl-L-methionine</name>
        <dbReference type="ChEBI" id="CHEBI:59789"/>
    </ligand>
</feature>
<sequence>MSGKKRTASSSRWMQEHFDDHYVKLAQKRGLRSRAAFKIEEIQEKDKLIRPGMTVVDLGAAPGGWSQVAVKLAGDKGKVIACDILPMDPIVGVDFLQGDFREEKVLDALLTRVGDAKVDVVLSDMAPNMSGTGGVDQPRAMYLVELALDMCHQVLAPNGCFAVKVFQGEGFDEYMKAVKEAFKTVKTRKPDSSRPRSREVYLVATGYKL</sequence>
<organism>
    <name type="scientific">Shewanella halifaxensis (strain HAW-EB4)</name>
    <dbReference type="NCBI Taxonomy" id="458817"/>
    <lineage>
        <taxon>Bacteria</taxon>
        <taxon>Pseudomonadati</taxon>
        <taxon>Pseudomonadota</taxon>
        <taxon>Gammaproteobacteria</taxon>
        <taxon>Alteromonadales</taxon>
        <taxon>Shewanellaceae</taxon>
        <taxon>Shewanella</taxon>
    </lineage>
</organism>